<accession>B0V7R3</accession>
<name>RSMJ_ACIBY</name>
<comment type="function">
    <text evidence="1">Specifically methylates the guanosine in position 1516 of 16S rRNA.</text>
</comment>
<comment type="catalytic activity">
    <reaction evidence="1">
        <text>guanosine(1516) in 16S rRNA + S-adenosyl-L-methionine = N(2)-methylguanosine(1516) in 16S rRNA + S-adenosyl-L-homocysteine + H(+)</text>
        <dbReference type="Rhea" id="RHEA:43220"/>
        <dbReference type="Rhea" id="RHEA-COMP:10412"/>
        <dbReference type="Rhea" id="RHEA-COMP:10413"/>
        <dbReference type="ChEBI" id="CHEBI:15378"/>
        <dbReference type="ChEBI" id="CHEBI:57856"/>
        <dbReference type="ChEBI" id="CHEBI:59789"/>
        <dbReference type="ChEBI" id="CHEBI:74269"/>
        <dbReference type="ChEBI" id="CHEBI:74481"/>
        <dbReference type="EC" id="2.1.1.242"/>
    </reaction>
</comment>
<comment type="subcellular location">
    <subcellularLocation>
        <location evidence="1">Cytoplasm</location>
    </subcellularLocation>
</comment>
<comment type="similarity">
    <text evidence="1">Belongs to the methyltransferase superfamily. RsmJ family.</text>
</comment>
<gene>
    <name evidence="1" type="primary">rsmJ</name>
    <name type="ordered locus">ABAYE3118</name>
</gene>
<feature type="chain" id="PRO_0000383369" description="Ribosomal RNA small subunit methyltransferase J">
    <location>
        <begin position="1"/>
        <end position="279"/>
    </location>
</feature>
<feature type="binding site" evidence="1">
    <location>
        <begin position="138"/>
        <end position="139"/>
    </location>
    <ligand>
        <name>S-adenosyl-L-methionine</name>
        <dbReference type="ChEBI" id="CHEBI:59789"/>
    </ligand>
</feature>
<feature type="binding site" evidence="1">
    <location>
        <position position="194"/>
    </location>
    <ligand>
        <name>S-adenosyl-L-methionine</name>
        <dbReference type="ChEBI" id="CHEBI:59789"/>
    </ligand>
</feature>
<sequence>MEKNCGSGQSKLKALRMHMYFEVDFQEQAQHYQAVLHSRGVTVDLQPIEKLNARFLRLNPDLALCVDENGLWLSANGMKMQPDWKAEIPRLKRASLKSEMIARACQLGEKPVLVDATAGLGHDSLLMAYLGAQIQLVERHPILFTLLEDSKAQAQHDPFLSQFMDRIQLIFADSASYLQQLDQEEKTVDVVYLDPMFPQRDQNQQAIKKQAQVKKQMQLLHLLLPEDGEMDLGDHLLELAKKVAKRVIVKRPRHAIFLANQEPAHQWQGDACRFDAYFQ</sequence>
<protein>
    <recommendedName>
        <fullName evidence="1">Ribosomal RNA small subunit methyltransferase J</fullName>
        <ecNumber evidence="1">2.1.1.242</ecNumber>
    </recommendedName>
    <alternativeName>
        <fullName evidence="1">16S rRNA m2G1516 methyltransferase</fullName>
    </alternativeName>
    <alternativeName>
        <fullName evidence="1">rRNA (guanine-N(2)-)-methyltransferase</fullName>
    </alternativeName>
</protein>
<keyword id="KW-0963">Cytoplasm</keyword>
<keyword id="KW-0489">Methyltransferase</keyword>
<keyword id="KW-0698">rRNA processing</keyword>
<keyword id="KW-0949">S-adenosyl-L-methionine</keyword>
<keyword id="KW-0808">Transferase</keyword>
<evidence type="ECO:0000255" key="1">
    <source>
        <dbReference type="HAMAP-Rule" id="MF_01523"/>
    </source>
</evidence>
<dbReference type="EC" id="2.1.1.242" evidence="1"/>
<dbReference type="EMBL" id="CU459141">
    <property type="protein sequence ID" value="CAM87928.1"/>
    <property type="molecule type" value="Genomic_DNA"/>
</dbReference>
<dbReference type="SMR" id="B0V7R3"/>
<dbReference type="EnsemblBacteria" id="CAM87928">
    <property type="protein sequence ID" value="CAM87928"/>
    <property type="gene ID" value="ABAYE3118"/>
</dbReference>
<dbReference type="KEGG" id="aby:ABAYE3118"/>
<dbReference type="HOGENOM" id="CLU_076324_1_0_6"/>
<dbReference type="GO" id="GO:0005737">
    <property type="term" value="C:cytoplasm"/>
    <property type="evidence" value="ECO:0007669"/>
    <property type="project" value="UniProtKB-SubCell"/>
</dbReference>
<dbReference type="GO" id="GO:0008990">
    <property type="term" value="F:rRNA (guanine-N2-)-methyltransferase activity"/>
    <property type="evidence" value="ECO:0007669"/>
    <property type="project" value="UniProtKB-UniRule"/>
</dbReference>
<dbReference type="CDD" id="cd02440">
    <property type="entry name" value="AdoMet_MTases"/>
    <property type="match status" value="1"/>
</dbReference>
<dbReference type="Gene3D" id="3.40.50.150">
    <property type="entry name" value="Vaccinia Virus protein VP39"/>
    <property type="match status" value="1"/>
</dbReference>
<dbReference type="HAMAP" id="MF_01523">
    <property type="entry name" value="16SrRNA_methyltr_J"/>
    <property type="match status" value="1"/>
</dbReference>
<dbReference type="InterPro" id="IPR007536">
    <property type="entry name" value="16SrRNA_methylTrfase_J"/>
</dbReference>
<dbReference type="InterPro" id="IPR029063">
    <property type="entry name" value="SAM-dependent_MTases_sf"/>
</dbReference>
<dbReference type="PANTHER" id="PTHR36112">
    <property type="entry name" value="RIBOSOMAL RNA SMALL SUBUNIT METHYLTRANSFERASE J"/>
    <property type="match status" value="1"/>
</dbReference>
<dbReference type="PANTHER" id="PTHR36112:SF1">
    <property type="entry name" value="RIBOSOMAL RNA SMALL SUBUNIT METHYLTRANSFERASE J"/>
    <property type="match status" value="1"/>
</dbReference>
<dbReference type="Pfam" id="PF04445">
    <property type="entry name" value="SAM_MT"/>
    <property type="match status" value="1"/>
</dbReference>
<dbReference type="SUPFAM" id="SSF53335">
    <property type="entry name" value="S-adenosyl-L-methionine-dependent methyltransferases"/>
    <property type="match status" value="1"/>
</dbReference>
<proteinExistence type="inferred from homology"/>
<organism>
    <name type="scientific">Acinetobacter baumannii (strain AYE)</name>
    <dbReference type="NCBI Taxonomy" id="509173"/>
    <lineage>
        <taxon>Bacteria</taxon>
        <taxon>Pseudomonadati</taxon>
        <taxon>Pseudomonadota</taxon>
        <taxon>Gammaproteobacteria</taxon>
        <taxon>Moraxellales</taxon>
        <taxon>Moraxellaceae</taxon>
        <taxon>Acinetobacter</taxon>
        <taxon>Acinetobacter calcoaceticus/baumannii complex</taxon>
    </lineage>
</organism>
<reference key="1">
    <citation type="journal article" date="2008" name="PLoS ONE">
        <title>Comparative analysis of Acinetobacters: three genomes for three lifestyles.</title>
        <authorList>
            <person name="Vallenet D."/>
            <person name="Nordmann P."/>
            <person name="Barbe V."/>
            <person name="Poirel L."/>
            <person name="Mangenot S."/>
            <person name="Bataille E."/>
            <person name="Dossat C."/>
            <person name="Gas S."/>
            <person name="Kreimeyer A."/>
            <person name="Lenoble P."/>
            <person name="Oztas S."/>
            <person name="Poulain J."/>
            <person name="Segurens B."/>
            <person name="Robert C."/>
            <person name="Abergel C."/>
            <person name="Claverie J.-M."/>
            <person name="Raoult D."/>
            <person name="Medigue C."/>
            <person name="Weissenbach J."/>
            <person name="Cruveiller S."/>
        </authorList>
    </citation>
    <scope>NUCLEOTIDE SEQUENCE [LARGE SCALE GENOMIC DNA]</scope>
    <source>
        <strain>AYE</strain>
    </source>
</reference>